<accession>P0DRE8</accession>
<organism>
    <name type="scientific">Tityus obscurus</name>
    <name type="common">Amazonian scorpion</name>
    <name type="synonym">Tityus cambridgei</name>
    <dbReference type="NCBI Taxonomy" id="1221240"/>
    <lineage>
        <taxon>Eukaryota</taxon>
        <taxon>Metazoa</taxon>
        <taxon>Ecdysozoa</taxon>
        <taxon>Arthropoda</taxon>
        <taxon>Chelicerata</taxon>
        <taxon>Arachnida</taxon>
        <taxon>Scorpiones</taxon>
        <taxon>Buthida</taxon>
        <taxon>Buthoidea</taxon>
        <taxon>Buthidae</taxon>
        <taxon>Tityus</taxon>
    </lineage>
</organism>
<comment type="function">
    <text evidence="1">Does not induce hemolytic activity, lactate dehydrogenase (LDH) release from mast cells, mast cell degranulation, and antimicrobial effects. In vivo, injection into mice causes moderate edema formation, but induces very weak or no change in nociceptive sensibility. It also reduces mice locomotion, suggesting an increase in anxiety, but causes no alteration in rearing (standing on hind limbs).</text>
</comment>
<comment type="subcellular location">
    <subcellularLocation>
        <location evidence="1">Secreted</location>
    </subcellularLocation>
</comment>
<comment type="tissue specificity">
    <text evidence="4">Expressed by the venom gland.</text>
</comment>
<comment type="mass spectrometry" mass="1167.63" method="Electrospray" evidence="1"/>
<comment type="miscellaneous">
    <text evidence="3">The primary structure of this cryptide Pep-3 is identical to that of cryptide Pep-3 from other Tityus species (AC P69940, AC Q5G8A6, AC P0C2F3).</text>
</comment>
<proteinExistence type="evidence at protein level"/>
<protein>
    <recommendedName>
        <fullName evidence="2">Cryptide Pep-3</fullName>
    </recommendedName>
</protein>
<evidence type="ECO:0000269" key="1">
    <source>
    </source>
</evidence>
<evidence type="ECO:0000303" key="2">
    <source>
    </source>
</evidence>
<evidence type="ECO:0000305" key="3"/>
<evidence type="ECO:0000305" key="4">
    <source>
    </source>
</evidence>
<name>CRY3_TITOB</name>
<feature type="peptide" id="PRO_0000461738" description="Cryptide Pep-3" evidence="1">
    <location>
        <begin position="1"/>
        <end position="10"/>
    </location>
</feature>
<keyword id="KW-0903">Direct protein sequencing</keyword>
<keyword id="KW-0964">Secreted</keyword>
<reference key="1">
    <citation type="journal article" date="2018" name="J. Proteomics">
        <title>Profiling the short, linear, non-disulfide bond-containing peptidome from the venom of the scorpion Tityus obscurus.</title>
        <authorList>
            <person name="Dias N.B."/>
            <person name="de Souza B.M."/>
            <person name="Cocchi F.K."/>
            <person name="Chalkidis H.M."/>
            <person name="Dorce V.A.C."/>
            <person name="Palma M.S."/>
        </authorList>
    </citation>
    <scope>PROTEIN SEQUENCE</scope>
    <scope>IDENTIFICATION BY MASS SPECTROMETRY</scope>
    <scope>MASS SPECTROMETRY</scope>
    <scope>SUBCELLULAR LOCATION</scope>
    <scope>SYNTHESIS</scope>
    <scope>FUNCTION</scope>
    <scope>BIOASSAY</scope>
    <source>
        <tissue>Venom</tissue>
    </source>
</reference>
<sequence length="10" mass="1168">LIPNDQLRSI</sequence>
<dbReference type="GO" id="GO:0005576">
    <property type="term" value="C:extracellular region"/>
    <property type="evidence" value="ECO:0007669"/>
    <property type="project" value="UniProtKB-SubCell"/>
</dbReference>